<reference key="1">
    <citation type="journal article" date="2009" name="BMC Genomics">
        <title>Evidence for niche adaptation in the genome of the bovine pathogen Streptococcus uberis.</title>
        <authorList>
            <person name="Ward P.N."/>
            <person name="Holden M.T.G."/>
            <person name="Leigh J.A."/>
            <person name="Lennard N."/>
            <person name="Bignell A."/>
            <person name="Barron A."/>
            <person name="Clark L."/>
            <person name="Quail M.A."/>
            <person name="Woodward J."/>
            <person name="Barrell B.G."/>
            <person name="Egan S.A."/>
            <person name="Field T.R."/>
            <person name="Maskell D."/>
            <person name="Kehoe M."/>
            <person name="Dowson C.G."/>
            <person name="Chanter N."/>
            <person name="Whatmore A.M."/>
            <person name="Bentley S.D."/>
            <person name="Parkhill J."/>
        </authorList>
    </citation>
    <scope>NUCLEOTIDE SEQUENCE [LARGE SCALE GENOMIC DNA]</scope>
    <source>
        <strain>ATCC BAA-854 / 0140J</strain>
    </source>
</reference>
<keyword id="KW-0963">Cytoplasm</keyword>
<keyword id="KW-0238">DNA-binding</keyword>
<keyword id="KW-1185">Reference proteome</keyword>
<gene>
    <name type="ordered locus">SUB1611</name>
</gene>
<dbReference type="EMBL" id="AM946015">
    <property type="protein sequence ID" value="CAR43443.1"/>
    <property type="molecule type" value="Genomic_DNA"/>
</dbReference>
<dbReference type="RefSeq" id="WP_015911910.1">
    <property type="nucleotide sequence ID" value="NC_012004.1"/>
</dbReference>
<dbReference type="SMR" id="B9DVQ2"/>
<dbReference type="STRING" id="218495.SUB1611"/>
<dbReference type="KEGG" id="sub:SUB1611"/>
<dbReference type="eggNOG" id="COG0718">
    <property type="taxonomic scope" value="Bacteria"/>
</dbReference>
<dbReference type="HOGENOM" id="CLU_140930_1_1_9"/>
<dbReference type="OrthoDB" id="9795263at2"/>
<dbReference type="Proteomes" id="UP000000449">
    <property type="component" value="Chromosome"/>
</dbReference>
<dbReference type="GO" id="GO:0043590">
    <property type="term" value="C:bacterial nucleoid"/>
    <property type="evidence" value="ECO:0007669"/>
    <property type="project" value="UniProtKB-UniRule"/>
</dbReference>
<dbReference type="GO" id="GO:0005829">
    <property type="term" value="C:cytosol"/>
    <property type="evidence" value="ECO:0007669"/>
    <property type="project" value="TreeGrafter"/>
</dbReference>
<dbReference type="GO" id="GO:0003677">
    <property type="term" value="F:DNA binding"/>
    <property type="evidence" value="ECO:0007669"/>
    <property type="project" value="UniProtKB-UniRule"/>
</dbReference>
<dbReference type="Gene3D" id="3.30.1310.10">
    <property type="entry name" value="Nucleoid-associated protein YbaB-like domain"/>
    <property type="match status" value="1"/>
</dbReference>
<dbReference type="HAMAP" id="MF_00274">
    <property type="entry name" value="DNA_YbaB_EbfC"/>
    <property type="match status" value="1"/>
</dbReference>
<dbReference type="InterPro" id="IPR036894">
    <property type="entry name" value="YbaB-like_sf"/>
</dbReference>
<dbReference type="InterPro" id="IPR004401">
    <property type="entry name" value="YbaB/EbfC"/>
</dbReference>
<dbReference type="NCBIfam" id="TIGR00103">
    <property type="entry name" value="DNA_YbaB_EbfC"/>
    <property type="match status" value="1"/>
</dbReference>
<dbReference type="PANTHER" id="PTHR33449">
    <property type="entry name" value="NUCLEOID-ASSOCIATED PROTEIN YBAB"/>
    <property type="match status" value="1"/>
</dbReference>
<dbReference type="PANTHER" id="PTHR33449:SF1">
    <property type="entry name" value="NUCLEOID-ASSOCIATED PROTEIN YBAB"/>
    <property type="match status" value="1"/>
</dbReference>
<dbReference type="Pfam" id="PF02575">
    <property type="entry name" value="YbaB_DNA_bd"/>
    <property type="match status" value="1"/>
</dbReference>
<dbReference type="PIRSF" id="PIRSF004555">
    <property type="entry name" value="UCP004555"/>
    <property type="match status" value="1"/>
</dbReference>
<dbReference type="SUPFAM" id="SSF82607">
    <property type="entry name" value="YbaB-like"/>
    <property type="match status" value="1"/>
</dbReference>
<feature type="chain" id="PRO_1000197683" description="Nucleoid-associated protein SUB1611">
    <location>
        <begin position="1"/>
        <end position="99"/>
    </location>
</feature>
<accession>B9DVQ2</accession>
<name>Y1611_STRU0</name>
<evidence type="ECO:0000255" key="1">
    <source>
        <dbReference type="HAMAP-Rule" id="MF_00274"/>
    </source>
</evidence>
<sequence>MMNMQNMMKQAQKLQKQMEQKQADLAAMTFVGKSAQDLVTATFTGDKKMVSIDFKEAVVDPDDMETLSDMTTQAINDALAQIDEATKKTMGAFAGKLPF</sequence>
<proteinExistence type="inferred from homology"/>
<comment type="function">
    <text evidence="1">Binds to DNA and alters its conformation. May be involved in regulation of gene expression, nucleoid organization and DNA protection.</text>
</comment>
<comment type="subunit">
    <text evidence="1">Homodimer.</text>
</comment>
<comment type="subcellular location">
    <subcellularLocation>
        <location evidence="1">Cytoplasm</location>
        <location evidence="1">Nucleoid</location>
    </subcellularLocation>
</comment>
<comment type="similarity">
    <text evidence="1">Belongs to the YbaB/EbfC family.</text>
</comment>
<organism>
    <name type="scientific">Streptococcus uberis (strain ATCC BAA-854 / 0140J)</name>
    <dbReference type="NCBI Taxonomy" id="218495"/>
    <lineage>
        <taxon>Bacteria</taxon>
        <taxon>Bacillati</taxon>
        <taxon>Bacillota</taxon>
        <taxon>Bacilli</taxon>
        <taxon>Lactobacillales</taxon>
        <taxon>Streptococcaceae</taxon>
        <taxon>Streptococcus</taxon>
    </lineage>
</organism>
<protein>
    <recommendedName>
        <fullName evidence="1">Nucleoid-associated protein SUB1611</fullName>
    </recommendedName>
</protein>